<evidence type="ECO:0000250" key="1">
    <source>
        <dbReference type="UniProtKB" id="Q69CM7"/>
    </source>
</evidence>
<evidence type="ECO:0000256" key="2">
    <source>
        <dbReference type="SAM" id="MobiDB-lite"/>
    </source>
</evidence>
<evidence type="ECO:0000269" key="3">
    <source>
    </source>
</evidence>
<evidence type="ECO:0000269" key="4">
    <source>
    </source>
</evidence>
<evidence type="ECO:0000269" key="5">
    <source>
    </source>
</evidence>
<evidence type="ECO:0000269" key="6">
    <source>
    </source>
</evidence>
<evidence type="ECO:0000305" key="7"/>
<evidence type="ECO:0000312" key="8">
    <source>
        <dbReference type="EMBL" id="AAH28393.1"/>
    </source>
</evidence>
<evidence type="ECO:0000312" key="9">
    <source>
        <dbReference type="EMBL" id="BAB88692.1"/>
    </source>
</evidence>
<evidence type="ECO:0000312" key="10">
    <source>
        <dbReference type="EMBL" id="CAB66699.2"/>
    </source>
</evidence>
<reference evidence="7 9" key="1">
    <citation type="journal article" date="2002" name="Biochim. Biophys. Acta">
        <title>AMAP-1, a novel testis-specific AMY-1-binding protein, is differentially expressed during the course of spermatogenesis.</title>
        <authorList>
            <person name="Yukitake H."/>
            <person name="Furusawa M."/>
            <person name="Taira T."/>
            <person name="Iguchi-Ariga S.M.M."/>
            <person name="Ariga H."/>
        </authorList>
    </citation>
    <scope>NUCLEOTIDE SEQUENCE [MRNA] (ISOFORM 2)</scope>
    <scope>FUNCTION</scope>
    <scope>INTERACTION WITH MYCBP</scope>
    <scope>SUBCELLULAR LOCATION</scope>
    <scope>TISSUE SPECIFICITY</scope>
    <source>
        <tissue evidence="9">Testis</tissue>
    </source>
</reference>
<reference key="2">
    <citation type="submission" date="2010-03" db="EMBL/GenBank/DDBJ databases">
        <title>Human testis protein.</title>
        <authorList>
            <person name="Li J.Y."/>
        </authorList>
    </citation>
    <scope>NUCLEOTIDE SEQUENCE [MRNA] (ISOFORM 1)</scope>
</reference>
<reference key="3">
    <citation type="journal article" date="2004" name="Nat. Genet.">
        <title>Complete sequencing and characterization of 21,243 full-length human cDNAs.</title>
        <authorList>
            <person name="Ota T."/>
            <person name="Suzuki Y."/>
            <person name="Nishikawa T."/>
            <person name="Otsuki T."/>
            <person name="Sugiyama T."/>
            <person name="Irie R."/>
            <person name="Wakamatsu A."/>
            <person name="Hayashi K."/>
            <person name="Sato H."/>
            <person name="Nagai K."/>
            <person name="Kimura K."/>
            <person name="Makita H."/>
            <person name="Sekine M."/>
            <person name="Obayashi M."/>
            <person name="Nishi T."/>
            <person name="Shibahara T."/>
            <person name="Tanaka T."/>
            <person name="Ishii S."/>
            <person name="Yamamoto J."/>
            <person name="Saito K."/>
            <person name="Kawai Y."/>
            <person name="Isono Y."/>
            <person name="Nakamura Y."/>
            <person name="Nagahari K."/>
            <person name="Murakami K."/>
            <person name="Yasuda T."/>
            <person name="Iwayanagi T."/>
            <person name="Wagatsuma M."/>
            <person name="Shiratori A."/>
            <person name="Sudo H."/>
            <person name="Hosoiri T."/>
            <person name="Kaku Y."/>
            <person name="Kodaira H."/>
            <person name="Kondo H."/>
            <person name="Sugawara M."/>
            <person name="Takahashi M."/>
            <person name="Kanda K."/>
            <person name="Yokoi T."/>
            <person name="Furuya T."/>
            <person name="Kikkawa E."/>
            <person name="Omura Y."/>
            <person name="Abe K."/>
            <person name="Kamihara K."/>
            <person name="Katsuta N."/>
            <person name="Sato K."/>
            <person name="Tanikawa M."/>
            <person name="Yamazaki M."/>
            <person name="Ninomiya K."/>
            <person name="Ishibashi T."/>
            <person name="Yamashita H."/>
            <person name="Murakawa K."/>
            <person name="Fujimori K."/>
            <person name="Tanai H."/>
            <person name="Kimata M."/>
            <person name="Watanabe M."/>
            <person name="Hiraoka S."/>
            <person name="Chiba Y."/>
            <person name="Ishida S."/>
            <person name="Ono Y."/>
            <person name="Takiguchi S."/>
            <person name="Watanabe S."/>
            <person name="Yosida M."/>
            <person name="Hotuta T."/>
            <person name="Kusano J."/>
            <person name="Kanehori K."/>
            <person name="Takahashi-Fujii A."/>
            <person name="Hara H."/>
            <person name="Tanase T.-O."/>
            <person name="Nomura Y."/>
            <person name="Togiya S."/>
            <person name="Komai F."/>
            <person name="Hara R."/>
            <person name="Takeuchi K."/>
            <person name="Arita M."/>
            <person name="Imose N."/>
            <person name="Musashino K."/>
            <person name="Yuuki H."/>
            <person name="Oshima A."/>
            <person name="Sasaki N."/>
            <person name="Aotsuka S."/>
            <person name="Yoshikawa Y."/>
            <person name="Matsunawa H."/>
            <person name="Ichihara T."/>
            <person name="Shiohata N."/>
            <person name="Sano S."/>
            <person name="Moriya S."/>
            <person name="Momiyama H."/>
            <person name="Satoh N."/>
            <person name="Takami S."/>
            <person name="Terashima Y."/>
            <person name="Suzuki O."/>
            <person name="Nakagawa S."/>
            <person name="Senoh A."/>
            <person name="Mizoguchi H."/>
            <person name="Goto Y."/>
            <person name="Shimizu F."/>
            <person name="Wakebe H."/>
            <person name="Hishigaki H."/>
            <person name="Watanabe T."/>
            <person name="Sugiyama A."/>
            <person name="Takemoto M."/>
            <person name="Kawakami B."/>
            <person name="Yamazaki M."/>
            <person name="Watanabe K."/>
            <person name="Kumagai A."/>
            <person name="Itakura S."/>
            <person name="Fukuzumi Y."/>
            <person name="Fujimori Y."/>
            <person name="Komiyama M."/>
            <person name="Tashiro H."/>
            <person name="Tanigami A."/>
            <person name="Fujiwara T."/>
            <person name="Ono T."/>
            <person name="Yamada K."/>
            <person name="Fujii Y."/>
            <person name="Ozaki K."/>
            <person name="Hirao M."/>
            <person name="Ohmori Y."/>
            <person name="Kawabata A."/>
            <person name="Hikiji T."/>
            <person name="Kobatake N."/>
            <person name="Inagaki H."/>
            <person name="Ikema Y."/>
            <person name="Okamoto S."/>
            <person name="Okitani R."/>
            <person name="Kawakami T."/>
            <person name="Noguchi S."/>
            <person name="Itoh T."/>
            <person name="Shigeta K."/>
            <person name="Senba T."/>
            <person name="Matsumura K."/>
            <person name="Nakajima Y."/>
            <person name="Mizuno T."/>
            <person name="Morinaga M."/>
            <person name="Sasaki M."/>
            <person name="Togashi T."/>
            <person name="Oyama M."/>
            <person name="Hata H."/>
            <person name="Watanabe M."/>
            <person name="Komatsu T."/>
            <person name="Mizushima-Sugano J."/>
            <person name="Satoh T."/>
            <person name="Shirai Y."/>
            <person name="Takahashi Y."/>
            <person name="Nakagawa K."/>
            <person name="Okumura K."/>
            <person name="Nagase T."/>
            <person name="Nomura N."/>
            <person name="Kikuchi H."/>
            <person name="Masuho Y."/>
            <person name="Yamashita R."/>
            <person name="Nakai K."/>
            <person name="Yada T."/>
            <person name="Nakamura Y."/>
            <person name="Ohara O."/>
            <person name="Isogai T."/>
            <person name="Sugano S."/>
        </authorList>
    </citation>
    <scope>NUCLEOTIDE SEQUENCE [LARGE SCALE MRNA] (ISOFORM 1)</scope>
    <scope>VARIANTS THR-424 AND ARG-947</scope>
    <source>
        <tissue>Testis</tissue>
    </source>
</reference>
<reference key="4">
    <citation type="journal article" date="2006" name="Nature">
        <title>DNA sequence of human chromosome 17 and analysis of rearrangement in the human lineage.</title>
        <authorList>
            <person name="Zody M.C."/>
            <person name="Garber M."/>
            <person name="Adams D.J."/>
            <person name="Sharpe T."/>
            <person name="Harrow J."/>
            <person name="Lupski J.R."/>
            <person name="Nicholson C."/>
            <person name="Searle S.M."/>
            <person name="Wilming L."/>
            <person name="Young S.K."/>
            <person name="Abouelleil A."/>
            <person name="Allen N.R."/>
            <person name="Bi W."/>
            <person name="Bloom T."/>
            <person name="Borowsky M.L."/>
            <person name="Bugalter B.E."/>
            <person name="Butler J."/>
            <person name="Chang J.L."/>
            <person name="Chen C.-K."/>
            <person name="Cook A."/>
            <person name="Corum B."/>
            <person name="Cuomo C.A."/>
            <person name="de Jong P.J."/>
            <person name="DeCaprio D."/>
            <person name="Dewar K."/>
            <person name="FitzGerald M."/>
            <person name="Gilbert J."/>
            <person name="Gibson R."/>
            <person name="Gnerre S."/>
            <person name="Goldstein S."/>
            <person name="Grafham D.V."/>
            <person name="Grocock R."/>
            <person name="Hafez N."/>
            <person name="Hagopian D.S."/>
            <person name="Hart E."/>
            <person name="Norman C.H."/>
            <person name="Humphray S."/>
            <person name="Jaffe D.B."/>
            <person name="Jones M."/>
            <person name="Kamal M."/>
            <person name="Khodiyar V.K."/>
            <person name="LaButti K."/>
            <person name="Laird G."/>
            <person name="Lehoczky J."/>
            <person name="Liu X."/>
            <person name="Lokyitsang T."/>
            <person name="Loveland J."/>
            <person name="Lui A."/>
            <person name="Macdonald P."/>
            <person name="Major J.E."/>
            <person name="Matthews L."/>
            <person name="Mauceli E."/>
            <person name="McCarroll S.A."/>
            <person name="Mihalev A.H."/>
            <person name="Mudge J."/>
            <person name="Nguyen C."/>
            <person name="Nicol R."/>
            <person name="O'Leary S.B."/>
            <person name="Osoegawa K."/>
            <person name="Schwartz D.C."/>
            <person name="Shaw-Smith C."/>
            <person name="Stankiewicz P."/>
            <person name="Steward C."/>
            <person name="Swarbreck D."/>
            <person name="Venkataraman V."/>
            <person name="Whittaker C.A."/>
            <person name="Yang X."/>
            <person name="Zimmer A.R."/>
            <person name="Bradley A."/>
            <person name="Hubbard T."/>
            <person name="Birren B.W."/>
            <person name="Rogers J."/>
            <person name="Lander E.S."/>
            <person name="Nusbaum C."/>
        </authorList>
    </citation>
    <scope>NUCLEOTIDE SEQUENCE [LARGE SCALE GENOMIC DNA]</scope>
</reference>
<reference evidence="7 8" key="5">
    <citation type="journal article" date="2004" name="Genome Res.">
        <title>The status, quality, and expansion of the NIH full-length cDNA project: the Mammalian Gene Collection (MGC).</title>
        <authorList>
            <consortium name="The MGC Project Team"/>
        </authorList>
    </citation>
    <scope>NUCLEOTIDE SEQUENCE [LARGE SCALE MRNA] (ISOFORM 2)</scope>
    <scope>VARIANTS THR-424; TRP-725 AND ARG-947</scope>
    <source>
        <tissue evidence="8">Testis</tissue>
    </source>
</reference>
<reference evidence="7 10" key="6">
    <citation type="journal article" date="2001" name="Genome Res.">
        <title>Towards a catalog of human genes and proteins: sequencing and analysis of 500 novel complete protein coding human cDNAs.</title>
        <authorList>
            <person name="Wiemann S."/>
            <person name="Weil B."/>
            <person name="Wellenreuther R."/>
            <person name="Gassenhuber J."/>
            <person name="Glassl S."/>
            <person name="Ansorge W."/>
            <person name="Boecher M."/>
            <person name="Bloecker H."/>
            <person name="Bauersachs S."/>
            <person name="Blum H."/>
            <person name="Lauber J."/>
            <person name="Duesterhoeft A."/>
            <person name="Beyer A."/>
            <person name="Koehrer K."/>
            <person name="Strack N."/>
            <person name="Mewes H.-W."/>
            <person name="Ottenwaelder B."/>
            <person name="Obermaier B."/>
            <person name="Tampe J."/>
            <person name="Heubner D."/>
            <person name="Wambutt R."/>
            <person name="Korn B."/>
            <person name="Klein M."/>
            <person name="Poustka A."/>
        </authorList>
    </citation>
    <scope>NUCLEOTIDE SEQUENCE [LARGE SCALE MRNA] OF 233-984 (ISOFORMS 1/2)</scope>
    <scope>VARIANTS THR-424 AND ARG-947</scope>
    <source>
        <tissue evidence="10">Testis</tissue>
    </source>
</reference>
<name>MYBPP_HUMAN</name>
<proteinExistence type="evidence at protein level"/>
<organism>
    <name type="scientific">Homo sapiens</name>
    <name type="common">Human</name>
    <dbReference type="NCBI Taxonomy" id="9606"/>
    <lineage>
        <taxon>Eukaryota</taxon>
        <taxon>Metazoa</taxon>
        <taxon>Chordata</taxon>
        <taxon>Craniata</taxon>
        <taxon>Vertebrata</taxon>
        <taxon>Euteleostomi</taxon>
        <taxon>Mammalia</taxon>
        <taxon>Eutheria</taxon>
        <taxon>Euarchontoglires</taxon>
        <taxon>Primates</taxon>
        <taxon>Haplorrhini</taxon>
        <taxon>Catarrhini</taxon>
        <taxon>Hominidae</taxon>
        <taxon>Homo</taxon>
    </lineage>
</organism>
<comment type="function">
    <text evidence="1 4">May play a role in spermatogenesis. May be involved in synaptic processes (By similarity).</text>
</comment>
<comment type="subunit">
    <text evidence="4">Interacts with MYCBP.</text>
</comment>
<comment type="interaction">
    <interactant intactId="EBI-1391585">
        <id>Q8TBZ2</id>
    </interactant>
    <interactant intactId="EBI-716185">
        <id>Q99417</id>
        <label>MYCBP</label>
    </interactant>
    <organismsDiffer>false</organismsDiffer>
    <experiments>4</experiments>
</comment>
<comment type="subcellular location">
    <subcellularLocation>
        <location evidence="4">Cytoplasm</location>
    </subcellularLocation>
    <subcellularLocation>
        <location evidence="1">Membrane</location>
    </subcellularLocation>
    <text evidence="1 4">Colocalizes with MYCBP in the cytoplasm.</text>
</comment>
<comment type="alternative products">
    <event type="alternative initiation"/>
    <isoform>
        <id>Q8TBZ2-1</id>
        <name>1</name>
        <sequence type="displayed"/>
    </isoform>
    <isoform>
        <id>Q8TBZ2-2</id>
        <name>2</name>
        <sequence type="described" ref="VSP_062168"/>
    </isoform>
</comment>
<comment type="tissue specificity">
    <text evidence="4">Expressed specifically in testis.</text>
</comment>
<comment type="miscellaneous">
    <molecule>Isoform 2</molecule>
    <text evidence="7">Gene prediction based on conservation.</text>
</comment>
<comment type="sequence caution" evidence="7">
    <conflict type="erroneous initiation">
        <sequence resource="EMBL-CDS" id="AAH28393"/>
    </conflict>
    <text>Extended N-terminus.</text>
</comment>
<comment type="sequence caution" evidence="7">
    <conflict type="erroneous initiation">
        <sequence resource="EMBL-CDS" id="BAB88692"/>
    </conflict>
    <text>Extended N-terminus.</text>
</comment>
<gene>
    <name evidence="8" type="primary">MYCBPAP</name>
    <name evidence="9" type="synonym">AMAP1</name>
</gene>
<protein>
    <recommendedName>
        <fullName>MYCBP-associated protein</fullName>
    </recommendedName>
    <alternativeName>
        <fullName>AMAM-1</fullName>
    </alternativeName>
    <alternativeName>
        <fullName>AMY-1-binding protein 1</fullName>
        <shortName>AMAP-1</shortName>
    </alternativeName>
</protein>
<keyword id="KW-0024">Alternative initiation</keyword>
<keyword id="KW-0963">Cytoplasm</keyword>
<keyword id="KW-0217">Developmental protein</keyword>
<keyword id="KW-0221">Differentiation</keyword>
<keyword id="KW-0472">Membrane</keyword>
<keyword id="KW-0597">Phosphoprotein</keyword>
<keyword id="KW-1267">Proteomics identification</keyword>
<keyword id="KW-1185">Reference proteome</keyword>
<keyword id="KW-0744">Spermatogenesis</keyword>
<dbReference type="EMBL" id="AB083068">
    <property type="protein sequence ID" value="BAB88692.1"/>
    <property type="status" value="ALT_INIT"/>
    <property type="molecule type" value="mRNA"/>
</dbReference>
<dbReference type="EMBL" id="HM005627">
    <property type="protein sequence ID" value="AEE61224.1"/>
    <property type="molecule type" value="mRNA"/>
</dbReference>
<dbReference type="EMBL" id="AK303041">
    <property type="protein sequence ID" value="BAG64163.1"/>
    <property type="molecule type" value="mRNA"/>
</dbReference>
<dbReference type="EMBL" id="AC021491">
    <property type="status" value="NOT_ANNOTATED_CDS"/>
    <property type="molecule type" value="Genomic_DNA"/>
</dbReference>
<dbReference type="EMBL" id="BC028393">
    <property type="protein sequence ID" value="AAH28393.1"/>
    <property type="status" value="ALT_INIT"/>
    <property type="molecule type" value="mRNA"/>
</dbReference>
<dbReference type="EMBL" id="AL136765">
    <property type="protein sequence ID" value="CAB66699.2"/>
    <property type="molecule type" value="mRNA"/>
</dbReference>
<dbReference type="CCDS" id="CCDS32680.3">
    <molecule id="Q8TBZ2-2"/>
</dbReference>
<dbReference type="RefSeq" id="NP_115509.4">
    <molecule id="Q8TBZ2-2"/>
    <property type="nucleotide sequence ID" value="NM_032133.4"/>
</dbReference>
<dbReference type="SMR" id="Q8TBZ2"/>
<dbReference type="BioGRID" id="123868">
    <property type="interactions" value="33"/>
</dbReference>
<dbReference type="CORUM" id="Q8TBZ2"/>
<dbReference type="FunCoup" id="Q8TBZ2">
    <property type="interactions" value="299"/>
</dbReference>
<dbReference type="IntAct" id="Q8TBZ2">
    <property type="interactions" value="24"/>
</dbReference>
<dbReference type="MINT" id="Q8TBZ2"/>
<dbReference type="STRING" id="9606.ENSP00000498665"/>
<dbReference type="iPTMnet" id="Q8TBZ2"/>
<dbReference type="PhosphoSitePlus" id="Q8TBZ2"/>
<dbReference type="BioMuta" id="MYCBPAP"/>
<dbReference type="DMDM" id="158563934"/>
<dbReference type="MassIVE" id="Q8TBZ2"/>
<dbReference type="PaxDb" id="9606-ENSP00000323184"/>
<dbReference type="PeptideAtlas" id="Q8TBZ2"/>
<dbReference type="ProteomicsDB" id="74056"/>
<dbReference type="TopDownProteomics" id="Q8TBZ2-1"/>
<dbReference type="Antibodypedia" id="45319">
    <property type="antibodies" value="46 antibodies from 13 providers"/>
</dbReference>
<dbReference type="DNASU" id="84073"/>
<dbReference type="Ensembl" id="ENST00000323776.11">
    <molecule id="Q8TBZ2-2"/>
    <property type="protein sequence ID" value="ENSP00000323184.6"/>
    <property type="gene ID" value="ENSG00000136449.16"/>
</dbReference>
<dbReference type="GeneID" id="84073"/>
<dbReference type="KEGG" id="hsa:84073"/>
<dbReference type="MANE-Select" id="ENST00000323776.11">
    <molecule id="Q8TBZ2-2"/>
    <property type="protein sequence ID" value="ENSP00000323184.6"/>
    <property type="RefSeq nucleotide sequence ID" value="NM_032133.6"/>
    <property type="RefSeq protein sequence ID" value="NP_115509.5"/>
</dbReference>
<dbReference type="UCSC" id="uc010wmr.3">
    <molecule id="Q8TBZ2-1"/>
    <property type="organism name" value="human"/>
</dbReference>
<dbReference type="AGR" id="HGNC:19677"/>
<dbReference type="CTD" id="84073"/>
<dbReference type="DisGeNET" id="84073"/>
<dbReference type="GeneCards" id="MYCBPAP"/>
<dbReference type="HGNC" id="HGNC:19677">
    <property type="gene designation" value="MYCBPAP"/>
</dbReference>
<dbReference type="HPA" id="ENSG00000136449">
    <property type="expression patterns" value="Tissue enriched (testis)"/>
</dbReference>
<dbReference type="MIM" id="609835">
    <property type="type" value="gene"/>
</dbReference>
<dbReference type="neXtProt" id="NX_Q8TBZ2"/>
<dbReference type="OpenTargets" id="ENSG00000136449"/>
<dbReference type="PharmGKB" id="PA134886355"/>
<dbReference type="VEuPathDB" id="HostDB:ENSG00000136449"/>
<dbReference type="eggNOG" id="ENOG502QT8X">
    <property type="taxonomic scope" value="Eukaryota"/>
</dbReference>
<dbReference type="GeneTree" id="ENSGT00640000091565"/>
<dbReference type="HOGENOM" id="CLU_014509_0_0_1"/>
<dbReference type="InParanoid" id="Q8TBZ2"/>
<dbReference type="OMA" id="RESWEFR"/>
<dbReference type="OrthoDB" id="10263316at2759"/>
<dbReference type="PAN-GO" id="Q8TBZ2">
    <property type="GO annotations" value="0 GO annotations based on evolutionary models"/>
</dbReference>
<dbReference type="PhylomeDB" id="Q8TBZ2"/>
<dbReference type="TreeFam" id="TF329788"/>
<dbReference type="PathwayCommons" id="Q8TBZ2"/>
<dbReference type="SignaLink" id="Q8TBZ2"/>
<dbReference type="SIGNOR" id="Q8TBZ2"/>
<dbReference type="BioGRID-ORCS" id="84073">
    <property type="hits" value="21 hits in 1137 CRISPR screens"/>
</dbReference>
<dbReference type="GenomeRNAi" id="84073"/>
<dbReference type="Pharos" id="Q8TBZ2">
    <property type="development level" value="Tbio"/>
</dbReference>
<dbReference type="PRO" id="PR:Q8TBZ2"/>
<dbReference type="Proteomes" id="UP000005640">
    <property type="component" value="Chromosome 17"/>
</dbReference>
<dbReference type="RNAct" id="Q8TBZ2">
    <property type="molecule type" value="protein"/>
</dbReference>
<dbReference type="Bgee" id="ENSG00000136449">
    <property type="expression patterns" value="Expressed in left testis and 100 other cell types or tissues"/>
</dbReference>
<dbReference type="ExpressionAtlas" id="Q8TBZ2">
    <property type="expression patterns" value="baseline and differential"/>
</dbReference>
<dbReference type="GO" id="GO:0030125">
    <property type="term" value="C:clathrin vesicle coat"/>
    <property type="evidence" value="ECO:0000318"/>
    <property type="project" value="GO_Central"/>
</dbReference>
<dbReference type="GO" id="GO:0005737">
    <property type="term" value="C:cytoplasm"/>
    <property type="evidence" value="ECO:0000314"/>
    <property type="project" value="UniProtKB"/>
</dbReference>
<dbReference type="GO" id="GO:0005768">
    <property type="term" value="C:endosome"/>
    <property type="evidence" value="ECO:0000318"/>
    <property type="project" value="GO_Central"/>
</dbReference>
<dbReference type="GO" id="GO:0005886">
    <property type="term" value="C:plasma membrane"/>
    <property type="evidence" value="ECO:0000318"/>
    <property type="project" value="GO_Central"/>
</dbReference>
<dbReference type="GO" id="GO:0045202">
    <property type="term" value="C:synapse"/>
    <property type="evidence" value="ECO:0007669"/>
    <property type="project" value="GOC"/>
</dbReference>
<dbReference type="GO" id="GO:0030276">
    <property type="term" value="F:clathrin binding"/>
    <property type="evidence" value="ECO:0000318"/>
    <property type="project" value="GO_Central"/>
</dbReference>
<dbReference type="GO" id="GO:0005543">
    <property type="term" value="F:phospholipid binding"/>
    <property type="evidence" value="ECO:0000318"/>
    <property type="project" value="GO_Central"/>
</dbReference>
<dbReference type="GO" id="GO:0030154">
    <property type="term" value="P:cell differentiation"/>
    <property type="evidence" value="ECO:0007669"/>
    <property type="project" value="UniProtKB-KW"/>
</dbReference>
<dbReference type="GO" id="GO:0007268">
    <property type="term" value="P:chemical synaptic transmission"/>
    <property type="evidence" value="ECO:0000250"/>
    <property type="project" value="UniProtKB"/>
</dbReference>
<dbReference type="GO" id="GO:0006897">
    <property type="term" value="P:endocytosis"/>
    <property type="evidence" value="ECO:0000318"/>
    <property type="project" value="GO_Central"/>
</dbReference>
<dbReference type="GO" id="GO:0007283">
    <property type="term" value="P:spermatogenesis"/>
    <property type="evidence" value="ECO:0000270"/>
    <property type="project" value="UniProtKB"/>
</dbReference>
<dbReference type="FunFam" id="2.60.40.10:FF:001106">
    <property type="entry name" value="MYCBP associated protein"/>
    <property type="match status" value="1"/>
</dbReference>
<dbReference type="Gene3D" id="2.60.40.10">
    <property type="entry name" value="Immunoglobulins"/>
    <property type="match status" value="1"/>
</dbReference>
<dbReference type="InterPro" id="IPR013783">
    <property type="entry name" value="Ig-like_fold"/>
</dbReference>
<dbReference type="InterPro" id="IPR032707">
    <property type="entry name" value="MYCBPAP"/>
</dbReference>
<dbReference type="PANTHER" id="PTHR48421">
    <property type="entry name" value="MYCBP-ASSOCIATED PROTEIN"/>
    <property type="match status" value="1"/>
</dbReference>
<dbReference type="PANTHER" id="PTHR48421:SF1">
    <property type="entry name" value="MYCBP-ASSOCIATED PROTEIN"/>
    <property type="match status" value="1"/>
</dbReference>
<dbReference type="Pfam" id="PF14646">
    <property type="entry name" value="MYCBPAP"/>
    <property type="match status" value="1"/>
</dbReference>
<accession>Q8TBZ2</accession>
<accession>A0A140VK87</accession>
<accession>A6NHJ3</accession>
<accession>B4DZQ1</accession>
<accession>Q8TDV8</accession>
<accession>Q9H0K0</accession>
<feature type="chain" id="PRO_0000302877" description="MYCBP-associated protein">
    <location>
        <begin position="1"/>
        <end position="984"/>
    </location>
</feature>
<feature type="region of interest" description="Disordered" evidence="2">
    <location>
        <begin position="61"/>
        <end position="88"/>
    </location>
</feature>
<feature type="region of interest" description="Disordered" evidence="2">
    <location>
        <begin position="218"/>
        <end position="240"/>
    </location>
</feature>
<feature type="region of interest" description="Disordered" evidence="2">
    <location>
        <begin position="693"/>
        <end position="729"/>
    </location>
</feature>
<feature type="region of interest" description="Disordered" evidence="2">
    <location>
        <begin position="842"/>
        <end position="917"/>
    </location>
</feature>
<feature type="compositionally biased region" description="Basic and acidic residues" evidence="2">
    <location>
        <begin position="218"/>
        <end position="231"/>
    </location>
</feature>
<feature type="compositionally biased region" description="Basic and acidic residues" evidence="2">
    <location>
        <begin position="862"/>
        <end position="910"/>
    </location>
</feature>
<feature type="modified residue" description="Phosphothreonine" evidence="1">
    <location>
        <position position="613"/>
    </location>
</feature>
<feature type="modified residue" description="Phosphoserine" evidence="1">
    <location>
        <position position="619"/>
    </location>
</feature>
<feature type="splice variant" id="VSP_062168" description="In isoform 2.">
    <location>
        <begin position="1"/>
        <end position="43"/>
    </location>
</feature>
<feature type="sequence variant" id="VAR_035003" description="In dbSNP:rs1380657." evidence="3 5 6">
    <original>A</original>
    <variation>T</variation>
    <location>
        <position position="424"/>
    </location>
</feature>
<feature type="sequence variant" id="VAR_035004" description="In dbSNP:rs9890721." evidence="6">
    <original>R</original>
    <variation>W</variation>
    <location>
        <position position="725"/>
    </location>
</feature>
<feature type="sequence variant" id="VAR_035005" description="In dbSNP:rs1133818." evidence="3 5 6">
    <original>S</original>
    <variation>R</variation>
    <location>
        <position position="947"/>
    </location>
</feature>
<feature type="sequence conflict" description="In Ref. 3; BAG64163." evidence="7" ref="3">
    <original>E</original>
    <variation>D</variation>
    <location>
        <position position="228"/>
    </location>
</feature>
<feature type="sequence conflict" description="In Ref. 3; BAG64163." evidence="7" ref="3">
    <original>K</original>
    <variation>N</variation>
    <location>
        <position position="885"/>
    </location>
</feature>
<sequence>MRAPARGTGCCGRSGGRWLAGAAQPRCLWAGGAGQRFMVPGGTMKSLKKDSRLRITPTRLLEASENVKEKKRAKGPEQPTPTIQEEPEPVSNVLQGDDILALAIKKEDLKEQHIPRLTEKEDKRVITQKFIIRKLKPMDPRRKVCHLVARPANPDEATKPLDYSGPGDSFDGSDQILPHHILGSLQDFKRIALARGNTQLAERIPTSPCLMTLISAEGESKQKAPKEEKRPPWAPPPQHNFLKNWQRNTALRKKQQEALSEHLKKPVSELLMHTGETYRRIQEERELIDCTLPTRRDRKSWENSGFWSRLEYLGDEMTGLVMTKTKTQRGLMEPITHIRKPHSIRVETGLPAQRDASYRYTWDRSLFLIYRRKELQRIMEELDFSQQDIDGLEVVGKGWPFSAVTVEDYTVFERSQGSSSEDTAYLGTLASSSDVSMPILGPSLLFCGKPACWIRGSNPQDKRQVGIAAHLTFETLEGEKTSSELTVVNNGTVAIWYDWRRQHQPDTFQDLKKNRMQRFYFDNREGVILPGEIKTFTFFFKSLTAGVFREFWEFRTHPTLLGGAILQVNLHAVSLTQDVFEDERKVLESKLTAHEAVTVVREVLQELLMGVLTPERTPSPVDAYLTEEDLFRHRNPPLHYEHQVVQSLHQLWRQYMTLPAKAEEARPGDKEHVSPIATEKASVNAELLPRFRSPISETQVPRPENEALRESGSQKARVGTKSPQRKSIMEEILVEESPDVDSTKSPWEPDGLPLLEWNLCLEDFRKAVMVLPDENHREDALMRLNKAALELCQKPRPLQSNLLHQMCLQLWRDVIDSLVGHSMWLRSVLGLPEKETIYLNVPEEQDQKSPPIMEVKVPVGKAGKEERKGAAQEKKQLGIKDKEDKKGAKLLGKEDRPNSKKHKAKDDKKVIKSASQDRFSLEDPTPDIILSSQEPIDPLVMGKYTQSLHSEVRGLLDTLVTDLMVLADELSPIKNVEEALRLCR</sequence>